<feature type="chain" id="PRO_0000051490" description="Mitochondrial division protein 1">
    <location>
        <begin position="1"/>
        <end position="651"/>
    </location>
</feature>
<feature type="repeat" description="WD 1">
    <location>
        <begin position="330"/>
        <end position="369"/>
    </location>
</feature>
<feature type="repeat" description="WD 2">
    <location>
        <begin position="372"/>
        <end position="409"/>
    </location>
</feature>
<feature type="repeat" description="WD 3">
    <location>
        <begin position="433"/>
        <end position="473"/>
    </location>
</feature>
<feature type="repeat" description="WD 4">
    <location>
        <begin position="492"/>
        <end position="531"/>
    </location>
</feature>
<feature type="repeat" description="WD 5">
    <location>
        <begin position="534"/>
        <end position="573"/>
    </location>
</feature>
<feature type="repeat" description="WD 6">
    <location>
        <begin position="575"/>
        <end position="610"/>
    </location>
</feature>
<feature type="repeat" description="WD 7">
    <location>
        <begin position="620"/>
        <end position="650"/>
    </location>
</feature>
<feature type="region of interest" description="Disordered" evidence="3">
    <location>
        <begin position="1"/>
        <end position="21"/>
    </location>
</feature>
<feature type="region of interest" description="Disordered" evidence="3">
    <location>
        <begin position="125"/>
        <end position="144"/>
    </location>
</feature>
<feature type="coiled-coil region" evidence="2">
    <location>
        <begin position="195"/>
        <end position="229"/>
    </location>
</feature>
<feature type="compositionally biased region" description="Basic and acidic residues" evidence="3">
    <location>
        <begin position="1"/>
        <end position="12"/>
    </location>
</feature>
<feature type="compositionally biased region" description="Polar residues" evidence="3">
    <location>
        <begin position="130"/>
        <end position="140"/>
    </location>
</feature>
<dbReference type="EMBL" id="CU329670">
    <property type="protein sequence ID" value="CAB65816.2"/>
    <property type="molecule type" value="Genomic_DNA"/>
</dbReference>
<dbReference type="PIR" id="T50245">
    <property type="entry name" value="T50245"/>
</dbReference>
<dbReference type="PIR" id="T50289">
    <property type="entry name" value="T50289"/>
</dbReference>
<dbReference type="RefSeq" id="XP_001713057.1">
    <property type="nucleotide sequence ID" value="XM_001713005.2"/>
</dbReference>
<dbReference type="SMR" id="Q9P7I3"/>
<dbReference type="BioGRID" id="280602">
    <property type="interactions" value="123"/>
</dbReference>
<dbReference type="FunCoup" id="Q9P7I3">
    <property type="interactions" value="198"/>
</dbReference>
<dbReference type="IntAct" id="Q9P7I3">
    <property type="interactions" value="5"/>
</dbReference>
<dbReference type="STRING" id="284812.Q9P7I3"/>
<dbReference type="iPTMnet" id="Q9P7I3"/>
<dbReference type="PaxDb" id="4896-SPAC664.15.1"/>
<dbReference type="EnsemblFungi" id="SPAC664.15.1">
    <property type="protein sequence ID" value="SPAC664.15.1:pep"/>
    <property type="gene ID" value="SPAC664.15"/>
</dbReference>
<dbReference type="PomBase" id="SPAC664.15">
    <property type="gene designation" value="mdv1"/>
</dbReference>
<dbReference type="VEuPathDB" id="FungiDB:SPAC664.15"/>
<dbReference type="eggNOG" id="KOG4155">
    <property type="taxonomic scope" value="Eukaryota"/>
</dbReference>
<dbReference type="HOGENOM" id="CLU_012350_1_1_1"/>
<dbReference type="InParanoid" id="Q9P7I3"/>
<dbReference type="PhylomeDB" id="Q9P7I3"/>
<dbReference type="PRO" id="PR:Q9P7I3"/>
<dbReference type="Proteomes" id="UP000002485">
    <property type="component" value="Chromosome I"/>
</dbReference>
<dbReference type="GO" id="GO:0032473">
    <property type="term" value="C:cytoplasmic side of mitochondrial outer membrane"/>
    <property type="evidence" value="ECO:0000266"/>
    <property type="project" value="PomBase"/>
</dbReference>
<dbReference type="GO" id="GO:0005739">
    <property type="term" value="C:mitochondrion"/>
    <property type="evidence" value="ECO:0007005"/>
    <property type="project" value="PomBase"/>
</dbReference>
<dbReference type="GO" id="GO:0000266">
    <property type="term" value="P:mitochondrial fission"/>
    <property type="evidence" value="ECO:0000318"/>
    <property type="project" value="GO_Central"/>
</dbReference>
<dbReference type="GO" id="GO:0016559">
    <property type="term" value="P:peroxisome fission"/>
    <property type="evidence" value="ECO:0000318"/>
    <property type="project" value="GO_Central"/>
</dbReference>
<dbReference type="CDD" id="cd00200">
    <property type="entry name" value="WD40"/>
    <property type="match status" value="1"/>
</dbReference>
<dbReference type="Gene3D" id="6.10.280.220">
    <property type="match status" value="1"/>
</dbReference>
<dbReference type="Gene3D" id="2.130.10.10">
    <property type="entry name" value="YVTN repeat-like/Quinoprotein amine dehydrogenase"/>
    <property type="match status" value="2"/>
</dbReference>
<dbReference type="InterPro" id="IPR020472">
    <property type="entry name" value="G-protein_beta_WD-40_rep"/>
</dbReference>
<dbReference type="InterPro" id="IPR015943">
    <property type="entry name" value="WD40/YVTN_repeat-like_dom_sf"/>
</dbReference>
<dbReference type="InterPro" id="IPR019775">
    <property type="entry name" value="WD40_repeat_CS"/>
</dbReference>
<dbReference type="InterPro" id="IPR036322">
    <property type="entry name" value="WD40_repeat_dom_sf"/>
</dbReference>
<dbReference type="InterPro" id="IPR001680">
    <property type="entry name" value="WD40_rpt"/>
</dbReference>
<dbReference type="PANTHER" id="PTHR19848:SF8">
    <property type="entry name" value="F-BOX AND WD REPEAT DOMAIN CONTAINING 7"/>
    <property type="match status" value="1"/>
</dbReference>
<dbReference type="PANTHER" id="PTHR19848">
    <property type="entry name" value="WD40 REPEAT PROTEIN"/>
    <property type="match status" value="1"/>
</dbReference>
<dbReference type="Pfam" id="PF00400">
    <property type="entry name" value="WD40"/>
    <property type="match status" value="4"/>
</dbReference>
<dbReference type="PRINTS" id="PR00320">
    <property type="entry name" value="GPROTEINBRPT"/>
</dbReference>
<dbReference type="SMART" id="SM00320">
    <property type="entry name" value="WD40"/>
    <property type="match status" value="6"/>
</dbReference>
<dbReference type="SUPFAM" id="SSF50978">
    <property type="entry name" value="WD40 repeat-like"/>
    <property type="match status" value="1"/>
</dbReference>
<dbReference type="PROSITE" id="PS00678">
    <property type="entry name" value="WD_REPEATS_1"/>
    <property type="match status" value="4"/>
</dbReference>
<dbReference type="PROSITE" id="PS50082">
    <property type="entry name" value="WD_REPEATS_2"/>
    <property type="match status" value="5"/>
</dbReference>
<dbReference type="PROSITE" id="PS50294">
    <property type="entry name" value="WD_REPEATS_REGION"/>
    <property type="match status" value="1"/>
</dbReference>
<proteinExistence type="inferred from homology"/>
<accession>Q9P7I3</accession>
<accession>Q9URZ9</accession>
<keyword id="KW-0175">Coiled coil</keyword>
<keyword id="KW-0472">Membrane</keyword>
<keyword id="KW-0496">Mitochondrion</keyword>
<keyword id="KW-1000">Mitochondrion outer membrane</keyword>
<keyword id="KW-1185">Reference proteome</keyword>
<keyword id="KW-0677">Repeat</keyword>
<keyword id="KW-0853">WD repeat</keyword>
<reference key="1">
    <citation type="journal article" date="2002" name="Nature">
        <title>The genome sequence of Schizosaccharomyces pombe.</title>
        <authorList>
            <person name="Wood V."/>
            <person name="Gwilliam R."/>
            <person name="Rajandream M.A."/>
            <person name="Lyne M.H."/>
            <person name="Lyne R."/>
            <person name="Stewart A."/>
            <person name="Sgouros J.G."/>
            <person name="Peat N."/>
            <person name="Hayles J."/>
            <person name="Baker S.G."/>
            <person name="Basham D."/>
            <person name="Bowman S."/>
            <person name="Brooks K."/>
            <person name="Brown D."/>
            <person name="Brown S."/>
            <person name="Chillingworth T."/>
            <person name="Churcher C.M."/>
            <person name="Collins M."/>
            <person name="Connor R."/>
            <person name="Cronin A."/>
            <person name="Davis P."/>
            <person name="Feltwell T."/>
            <person name="Fraser A."/>
            <person name="Gentles S."/>
            <person name="Goble A."/>
            <person name="Hamlin N."/>
            <person name="Harris D.E."/>
            <person name="Hidalgo J."/>
            <person name="Hodgson G."/>
            <person name="Holroyd S."/>
            <person name="Hornsby T."/>
            <person name="Howarth S."/>
            <person name="Huckle E.J."/>
            <person name="Hunt S."/>
            <person name="Jagels K."/>
            <person name="James K.D."/>
            <person name="Jones L."/>
            <person name="Jones M."/>
            <person name="Leather S."/>
            <person name="McDonald S."/>
            <person name="McLean J."/>
            <person name="Mooney P."/>
            <person name="Moule S."/>
            <person name="Mungall K.L."/>
            <person name="Murphy L.D."/>
            <person name="Niblett D."/>
            <person name="Odell C."/>
            <person name="Oliver K."/>
            <person name="O'Neil S."/>
            <person name="Pearson D."/>
            <person name="Quail M.A."/>
            <person name="Rabbinowitsch E."/>
            <person name="Rutherford K.M."/>
            <person name="Rutter S."/>
            <person name="Saunders D."/>
            <person name="Seeger K."/>
            <person name="Sharp S."/>
            <person name="Skelton J."/>
            <person name="Simmonds M.N."/>
            <person name="Squares R."/>
            <person name="Squares S."/>
            <person name="Stevens K."/>
            <person name="Taylor K."/>
            <person name="Taylor R.G."/>
            <person name="Tivey A."/>
            <person name="Walsh S.V."/>
            <person name="Warren T."/>
            <person name="Whitehead S."/>
            <person name="Woodward J.R."/>
            <person name="Volckaert G."/>
            <person name="Aert R."/>
            <person name="Robben J."/>
            <person name="Grymonprez B."/>
            <person name="Weltjens I."/>
            <person name="Vanstreels E."/>
            <person name="Rieger M."/>
            <person name="Schaefer M."/>
            <person name="Mueller-Auer S."/>
            <person name="Gabel C."/>
            <person name="Fuchs M."/>
            <person name="Duesterhoeft A."/>
            <person name="Fritzc C."/>
            <person name="Holzer E."/>
            <person name="Moestl D."/>
            <person name="Hilbert H."/>
            <person name="Borzym K."/>
            <person name="Langer I."/>
            <person name="Beck A."/>
            <person name="Lehrach H."/>
            <person name="Reinhardt R."/>
            <person name="Pohl T.M."/>
            <person name="Eger P."/>
            <person name="Zimmermann W."/>
            <person name="Wedler H."/>
            <person name="Wambutt R."/>
            <person name="Purnelle B."/>
            <person name="Goffeau A."/>
            <person name="Cadieu E."/>
            <person name="Dreano S."/>
            <person name="Gloux S."/>
            <person name="Lelaure V."/>
            <person name="Mottier S."/>
            <person name="Galibert F."/>
            <person name="Aves S.J."/>
            <person name="Xiang Z."/>
            <person name="Hunt C."/>
            <person name="Moore K."/>
            <person name="Hurst S.M."/>
            <person name="Lucas M."/>
            <person name="Rochet M."/>
            <person name="Gaillardin C."/>
            <person name="Tallada V.A."/>
            <person name="Garzon A."/>
            <person name="Thode G."/>
            <person name="Daga R.R."/>
            <person name="Cruzado L."/>
            <person name="Jimenez J."/>
            <person name="Sanchez M."/>
            <person name="del Rey F."/>
            <person name="Benito J."/>
            <person name="Dominguez A."/>
            <person name="Revuelta J.L."/>
            <person name="Moreno S."/>
            <person name="Armstrong J."/>
            <person name="Forsburg S.L."/>
            <person name="Cerutti L."/>
            <person name="Lowe T."/>
            <person name="McCombie W.R."/>
            <person name="Paulsen I."/>
            <person name="Potashkin J."/>
            <person name="Shpakovski G.V."/>
            <person name="Ussery D."/>
            <person name="Barrell B.G."/>
            <person name="Nurse P."/>
        </authorList>
    </citation>
    <scope>NUCLEOTIDE SEQUENCE [LARGE SCALE GENOMIC DNA]</scope>
    <source>
        <strain>972 / ATCC 24843</strain>
    </source>
</reference>
<reference key="2">
    <citation type="journal article" date="2006" name="Nat. Biotechnol.">
        <title>ORFeome cloning and global analysis of protein localization in the fission yeast Schizosaccharomyces pombe.</title>
        <authorList>
            <person name="Matsuyama A."/>
            <person name="Arai R."/>
            <person name="Yashiroda Y."/>
            <person name="Shirai A."/>
            <person name="Kamata A."/>
            <person name="Sekido S."/>
            <person name="Kobayashi Y."/>
            <person name="Hashimoto A."/>
            <person name="Hamamoto M."/>
            <person name="Hiraoka Y."/>
            <person name="Horinouchi S."/>
            <person name="Yoshida M."/>
        </authorList>
    </citation>
    <scope>SUBCELLULAR LOCATION [LARGE SCALE ANALYSIS]</scope>
</reference>
<gene>
    <name type="primary">mdv1</name>
    <name type="ORF">SPAC25D11.01</name>
    <name type="ORF">SPAC664.15</name>
    <name type="ORF">SPACUNK12.01</name>
</gene>
<sequence length="651" mass="72373">MTDNNSKSKDSSQKIPNDSLTPTISKGLRKDVFYWTKAIAYTTWNFFDSSPVTPQRNPISLFVRGLSHPFLRHRLSKSQFNEWFLSHNGVDPVQAQTLPDPLLFDIPDHQETSYSLLEGYSVTAHDHSDTSPLPITSSNQKEGKKNVSSIDVSMVSDSSEFKPDSLQHEKLVKKCNQLRLQKLINSSELAQIDLELSKLYSRRRQVLERLSKIEEQNLKYTSKLASVEKLMLDSDAQDLYSSYSHDLIPSQIEAGKNGANPDVFDDTHDKYTDNLSARAISPRAPRPSTASEVVSDYFEQNSAFSKAPENTESSVNQNYIVGNLVKQFQAHSEYITSLDFSHPFGTLATASTDKTVKVWDMAGVVYLGSLKGHSDYVSCLAIQDSFIATGSMDTTVRLWNLDNDVLHKDNPVEESLNSPPDQPVDNATNVLTSHTAPVTALALSSDDVLITGADDKTVRQWDIVTGRCIQTLDFVWAETHDTSTSQILVSDTYKQEPFIRALDCLDAAVASGTVDGLIRIWDLRIGLPVRSFIGHTAPISSLQFDSNHLYSGSYDNSVRIWDLRSGSPINIIPMEKKVNSLRLYQGRLAVASDEPNVRIFDTVSNRNWICSIPSHSDSIAAEPNSVPTSVQYKDRFLVDGKSDGSVSVFSA</sequence>
<name>MDV1_SCHPO</name>
<comment type="function">
    <text evidence="1">Involved in mitochondrial fission. Acts as an adapter protein required to form mitochondrial fission complexes. Formation of these complexes is required to promote constriction and fission of the mitochondrial compartment at a late step in mitochondrial division (By similarity).</text>
</comment>
<comment type="subcellular location">
    <subcellularLocation>
        <location evidence="1">Mitochondrion outer membrane</location>
        <topology evidence="1">Peripheral membrane protein</topology>
        <orientation evidence="1">Cytoplasmic side</orientation>
    </subcellularLocation>
</comment>
<comment type="similarity">
    <text evidence="4">Belongs to the WD repeat MDV1/CAF4 family.</text>
</comment>
<evidence type="ECO:0000250" key="1"/>
<evidence type="ECO:0000255" key="2"/>
<evidence type="ECO:0000256" key="3">
    <source>
        <dbReference type="SAM" id="MobiDB-lite"/>
    </source>
</evidence>
<evidence type="ECO:0000305" key="4"/>
<organism>
    <name type="scientific">Schizosaccharomyces pombe (strain 972 / ATCC 24843)</name>
    <name type="common">Fission yeast</name>
    <dbReference type="NCBI Taxonomy" id="284812"/>
    <lineage>
        <taxon>Eukaryota</taxon>
        <taxon>Fungi</taxon>
        <taxon>Dikarya</taxon>
        <taxon>Ascomycota</taxon>
        <taxon>Taphrinomycotina</taxon>
        <taxon>Schizosaccharomycetes</taxon>
        <taxon>Schizosaccharomycetales</taxon>
        <taxon>Schizosaccharomycetaceae</taxon>
        <taxon>Schizosaccharomyces</taxon>
    </lineage>
</organism>
<protein>
    <recommendedName>
        <fullName>Mitochondrial division protein 1</fullName>
    </recommendedName>
</protein>